<accession>Q3ZYT5</accession>
<keyword id="KW-0963">Cytoplasm</keyword>
<keyword id="KW-0255">Endonuclease</keyword>
<keyword id="KW-0378">Hydrolase</keyword>
<keyword id="KW-0479">Metal-binding</keyword>
<keyword id="KW-0540">Nuclease</keyword>
<keyword id="KW-0690">Ribosome biogenesis</keyword>
<keyword id="KW-0698">rRNA processing</keyword>
<keyword id="KW-0862">Zinc</keyword>
<protein>
    <recommendedName>
        <fullName evidence="1">Endoribonuclease YbeY</fullName>
        <ecNumber evidence="1">3.1.-.-</ecNumber>
    </recommendedName>
</protein>
<gene>
    <name evidence="1" type="primary">ybeY</name>
    <name type="ordered locus">cbdbA1322</name>
</gene>
<comment type="function">
    <text evidence="1">Single strand-specific metallo-endoribonuclease involved in late-stage 70S ribosome quality control and in maturation of the 3' terminus of the 16S rRNA.</text>
</comment>
<comment type="cofactor">
    <cofactor evidence="1">
        <name>Zn(2+)</name>
        <dbReference type="ChEBI" id="CHEBI:29105"/>
    </cofactor>
    <text evidence="1">Binds 1 zinc ion.</text>
</comment>
<comment type="subcellular location">
    <subcellularLocation>
        <location evidence="1">Cytoplasm</location>
    </subcellularLocation>
</comment>
<comment type="similarity">
    <text evidence="1">Belongs to the endoribonuclease YbeY family.</text>
</comment>
<sequence length="166" mass="18586">MILFRHMEINIIVKPPFKKLVSAQFLKKIASETLKAQAADPSSELGIVITGQEEIKELNCKYRQLDEPTDVLSFYMLEENPENLTAPDDFPTPPDEATHLGEVIISYPQAELQAGAAGHSVNHELAFLLIHGVLHLLGYDHHETAAEAVMKSHQDIAMKHIREILE</sequence>
<feature type="chain" id="PRO_0000284197" description="Endoribonuclease YbeY">
    <location>
        <begin position="1"/>
        <end position="166"/>
    </location>
</feature>
<feature type="binding site" evidence="1">
    <location>
        <position position="131"/>
    </location>
    <ligand>
        <name>Zn(2+)</name>
        <dbReference type="ChEBI" id="CHEBI:29105"/>
        <note>catalytic</note>
    </ligand>
</feature>
<feature type="binding site" evidence="1">
    <location>
        <position position="135"/>
    </location>
    <ligand>
        <name>Zn(2+)</name>
        <dbReference type="ChEBI" id="CHEBI:29105"/>
        <note>catalytic</note>
    </ligand>
</feature>
<feature type="binding site" evidence="1">
    <location>
        <position position="141"/>
    </location>
    <ligand>
        <name>Zn(2+)</name>
        <dbReference type="ChEBI" id="CHEBI:29105"/>
        <note>catalytic</note>
    </ligand>
</feature>
<dbReference type="EC" id="3.1.-.-" evidence="1"/>
<dbReference type="EMBL" id="AJ965256">
    <property type="protein sequence ID" value="CAI83377.1"/>
    <property type="molecule type" value="Genomic_DNA"/>
</dbReference>
<dbReference type="SMR" id="Q3ZYT5"/>
<dbReference type="KEGG" id="deh:cbdbA1322"/>
<dbReference type="HOGENOM" id="CLU_106710_3_0_0"/>
<dbReference type="Proteomes" id="UP000000433">
    <property type="component" value="Chromosome"/>
</dbReference>
<dbReference type="GO" id="GO:0005737">
    <property type="term" value="C:cytoplasm"/>
    <property type="evidence" value="ECO:0007669"/>
    <property type="project" value="UniProtKB-SubCell"/>
</dbReference>
<dbReference type="GO" id="GO:0004222">
    <property type="term" value="F:metalloendopeptidase activity"/>
    <property type="evidence" value="ECO:0007669"/>
    <property type="project" value="InterPro"/>
</dbReference>
<dbReference type="GO" id="GO:0004521">
    <property type="term" value="F:RNA endonuclease activity"/>
    <property type="evidence" value="ECO:0007669"/>
    <property type="project" value="UniProtKB-UniRule"/>
</dbReference>
<dbReference type="GO" id="GO:0008270">
    <property type="term" value="F:zinc ion binding"/>
    <property type="evidence" value="ECO:0007669"/>
    <property type="project" value="UniProtKB-UniRule"/>
</dbReference>
<dbReference type="GO" id="GO:0006364">
    <property type="term" value="P:rRNA processing"/>
    <property type="evidence" value="ECO:0007669"/>
    <property type="project" value="UniProtKB-UniRule"/>
</dbReference>
<dbReference type="Gene3D" id="3.40.390.30">
    <property type="entry name" value="Metalloproteases ('zincins'), catalytic domain"/>
    <property type="match status" value="1"/>
</dbReference>
<dbReference type="HAMAP" id="MF_00009">
    <property type="entry name" value="Endoribonucl_YbeY"/>
    <property type="match status" value="1"/>
</dbReference>
<dbReference type="InterPro" id="IPR023091">
    <property type="entry name" value="MetalPrtase_cat_dom_sf_prd"/>
</dbReference>
<dbReference type="InterPro" id="IPR002036">
    <property type="entry name" value="YbeY"/>
</dbReference>
<dbReference type="InterPro" id="IPR020549">
    <property type="entry name" value="YbeY_CS"/>
</dbReference>
<dbReference type="NCBIfam" id="TIGR00043">
    <property type="entry name" value="rRNA maturation RNase YbeY"/>
    <property type="match status" value="1"/>
</dbReference>
<dbReference type="PANTHER" id="PTHR46986">
    <property type="entry name" value="ENDORIBONUCLEASE YBEY, CHLOROPLASTIC"/>
    <property type="match status" value="1"/>
</dbReference>
<dbReference type="PANTHER" id="PTHR46986:SF1">
    <property type="entry name" value="ENDORIBONUCLEASE YBEY, CHLOROPLASTIC"/>
    <property type="match status" value="1"/>
</dbReference>
<dbReference type="Pfam" id="PF02130">
    <property type="entry name" value="YbeY"/>
    <property type="match status" value="1"/>
</dbReference>
<dbReference type="SUPFAM" id="SSF55486">
    <property type="entry name" value="Metalloproteases ('zincins'), catalytic domain"/>
    <property type="match status" value="1"/>
</dbReference>
<dbReference type="PROSITE" id="PS01306">
    <property type="entry name" value="UPF0054"/>
    <property type="match status" value="1"/>
</dbReference>
<proteinExistence type="inferred from homology"/>
<organism>
    <name type="scientific">Dehalococcoides mccartyi (strain CBDB1)</name>
    <dbReference type="NCBI Taxonomy" id="255470"/>
    <lineage>
        <taxon>Bacteria</taxon>
        <taxon>Bacillati</taxon>
        <taxon>Chloroflexota</taxon>
        <taxon>Dehalococcoidia</taxon>
        <taxon>Dehalococcoidales</taxon>
        <taxon>Dehalococcoidaceae</taxon>
        <taxon>Dehalococcoides</taxon>
    </lineage>
</organism>
<reference key="1">
    <citation type="journal article" date="2005" name="Nat. Biotechnol.">
        <title>Genome sequence of the chlorinated compound-respiring bacterium Dehalococcoides species strain CBDB1.</title>
        <authorList>
            <person name="Kube M."/>
            <person name="Beck A."/>
            <person name="Zinder S.H."/>
            <person name="Kuhl H."/>
            <person name="Reinhardt R."/>
            <person name="Adrian L."/>
        </authorList>
    </citation>
    <scope>NUCLEOTIDE SEQUENCE [LARGE SCALE GENOMIC DNA]</scope>
    <source>
        <strain>CBDB1</strain>
    </source>
</reference>
<evidence type="ECO:0000255" key="1">
    <source>
        <dbReference type="HAMAP-Rule" id="MF_00009"/>
    </source>
</evidence>
<name>YBEY_DEHMC</name>